<name>MIAA_ENTFA</name>
<reference key="1">
    <citation type="journal article" date="2003" name="Science">
        <title>Role of mobile DNA in the evolution of vancomycin-resistant Enterococcus faecalis.</title>
        <authorList>
            <person name="Paulsen I.T."/>
            <person name="Banerjei L."/>
            <person name="Myers G.S.A."/>
            <person name="Nelson K.E."/>
            <person name="Seshadri R."/>
            <person name="Read T.D."/>
            <person name="Fouts D.E."/>
            <person name="Eisen J.A."/>
            <person name="Gill S.R."/>
            <person name="Heidelberg J.F."/>
            <person name="Tettelin H."/>
            <person name="Dodson R.J."/>
            <person name="Umayam L.A."/>
            <person name="Brinkac L.M."/>
            <person name="Beanan M.J."/>
            <person name="Daugherty S.C."/>
            <person name="DeBoy R.T."/>
            <person name="Durkin S.A."/>
            <person name="Kolonay J.F."/>
            <person name="Madupu R."/>
            <person name="Nelson W.C."/>
            <person name="Vamathevan J.J."/>
            <person name="Tran B."/>
            <person name="Upton J."/>
            <person name="Hansen T."/>
            <person name="Shetty J."/>
            <person name="Khouri H.M."/>
            <person name="Utterback T.R."/>
            <person name="Radune D."/>
            <person name="Ketchum K.A."/>
            <person name="Dougherty B.A."/>
            <person name="Fraser C.M."/>
        </authorList>
    </citation>
    <scope>NUCLEOTIDE SEQUENCE [LARGE SCALE GENOMIC DNA]</scope>
    <source>
        <strain>ATCC 700802 / V583</strain>
    </source>
</reference>
<feature type="chain" id="PRO_0000163916" description="tRNA dimethylallyltransferase">
    <location>
        <begin position="1"/>
        <end position="309"/>
    </location>
</feature>
<feature type="region of interest" description="Interaction with substrate tRNA" evidence="1">
    <location>
        <begin position="34"/>
        <end position="37"/>
    </location>
</feature>
<feature type="binding site" evidence="1">
    <location>
        <begin position="9"/>
        <end position="16"/>
    </location>
    <ligand>
        <name>ATP</name>
        <dbReference type="ChEBI" id="CHEBI:30616"/>
    </ligand>
</feature>
<feature type="binding site" evidence="1">
    <location>
        <begin position="11"/>
        <end position="16"/>
    </location>
    <ligand>
        <name>substrate</name>
    </ligand>
</feature>
<feature type="site" description="Interaction with substrate tRNA" evidence="1">
    <location>
        <position position="100"/>
    </location>
</feature>
<feature type="site" description="Interaction with substrate tRNA" evidence="1">
    <location>
        <position position="125"/>
    </location>
</feature>
<comment type="function">
    <text evidence="1">Catalyzes the transfer of a dimethylallyl group onto the adenine at position 37 in tRNAs that read codons beginning with uridine, leading to the formation of N6-(dimethylallyl)adenosine (i(6)A).</text>
</comment>
<comment type="catalytic activity">
    <reaction evidence="1">
        <text>adenosine(37) in tRNA + dimethylallyl diphosphate = N(6)-dimethylallyladenosine(37) in tRNA + diphosphate</text>
        <dbReference type="Rhea" id="RHEA:26482"/>
        <dbReference type="Rhea" id="RHEA-COMP:10162"/>
        <dbReference type="Rhea" id="RHEA-COMP:10375"/>
        <dbReference type="ChEBI" id="CHEBI:33019"/>
        <dbReference type="ChEBI" id="CHEBI:57623"/>
        <dbReference type="ChEBI" id="CHEBI:74411"/>
        <dbReference type="ChEBI" id="CHEBI:74415"/>
        <dbReference type="EC" id="2.5.1.75"/>
    </reaction>
</comment>
<comment type="cofactor">
    <cofactor evidence="1">
        <name>Mg(2+)</name>
        <dbReference type="ChEBI" id="CHEBI:18420"/>
    </cofactor>
</comment>
<comment type="subunit">
    <text evidence="1">Monomer.</text>
</comment>
<comment type="similarity">
    <text evidence="1">Belongs to the IPP transferase family.</text>
</comment>
<protein>
    <recommendedName>
        <fullName evidence="1">tRNA dimethylallyltransferase</fullName>
        <ecNumber evidence="1">2.5.1.75</ecNumber>
    </recommendedName>
    <alternativeName>
        <fullName evidence="1">Dimethylallyl diphosphate:tRNA dimethylallyltransferase</fullName>
        <shortName evidence="1">DMAPP:tRNA dimethylallyltransferase</shortName>
        <shortName evidence="1">DMATase</shortName>
    </alternativeName>
    <alternativeName>
        <fullName evidence="1">Isopentenyl-diphosphate:tRNA isopentenyltransferase</fullName>
        <shortName evidence="1">IPP transferase</shortName>
        <shortName evidence="1">IPPT</shortName>
        <shortName evidence="1">IPTase</shortName>
    </alternativeName>
</protein>
<accession>Q820U0</accession>
<keyword id="KW-0067">ATP-binding</keyword>
<keyword id="KW-0460">Magnesium</keyword>
<keyword id="KW-0547">Nucleotide-binding</keyword>
<keyword id="KW-1185">Reference proteome</keyword>
<keyword id="KW-0808">Transferase</keyword>
<keyword id="KW-0819">tRNA processing</keyword>
<dbReference type="EC" id="2.5.1.75" evidence="1"/>
<dbReference type="EMBL" id="AE016830">
    <property type="protein sequence ID" value="AAO81894.1"/>
    <property type="molecule type" value="Genomic_DNA"/>
</dbReference>
<dbReference type="RefSeq" id="NP_815824.1">
    <property type="nucleotide sequence ID" value="NC_004668.1"/>
</dbReference>
<dbReference type="RefSeq" id="WP_002366931.1">
    <property type="nucleotide sequence ID" value="NZ_KE136528.1"/>
</dbReference>
<dbReference type="SMR" id="Q820U0"/>
<dbReference type="STRING" id="226185.EF_2162"/>
<dbReference type="DNASU" id="1201038"/>
<dbReference type="EnsemblBacteria" id="AAO81894">
    <property type="protein sequence ID" value="AAO81894"/>
    <property type="gene ID" value="EF_2162"/>
</dbReference>
<dbReference type="KEGG" id="efa:EF2162"/>
<dbReference type="PATRIC" id="fig|226185.45.peg.1366"/>
<dbReference type="eggNOG" id="COG0324">
    <property type="taxonomic scope" value="Bacteria"/>
</dbReference>
<dbReference type="HOGENOM" id="CLU_032616_0_1_9"/>
<dbReference type="Proteomes" id="UP000001415">
    <property type="component" value="Chromosome"/>
</dbReference>
<dbReference type="GO" id="GO:0005524">
    <property type="term" value="F:ATP binding"/>
    <property type="evidence" value="ECO:0007669"/>
    <property type="project" value="UniProtKB-UniRule"/>
</dbReference>
<dbReference type="GO" id="GO:0052381">
    <property type="term" value="F:tRNA dimethylallyltransferase activity"/>
    <property type="evidence" value="ECO:0007669"/>
    <property type="project" value="UniProtKB-UniRule"/>
</dbReference>
<dbReference type="GO" id="GO:0006400">
    <property type="term" value="P:tRNA modification"/>
    <property type="evidence" value="ECO:0007669"/>
    <property type="project" value="TreeGrafter"/>
</dbReference>
<dbReference type="Gene3D" id="1.10.20.140">
    <property type="match status" value="1"/>
</dbReference>
<dbReference type="Gene3D" id="3.40.50.300">
    <property type="entry name" value="P-loop containing nucleotide triphosphate hydrolases"/>
    <property type="match status" value="1"/>
</dbReference>
<dbReference type="HAMAP" id="MF_00185">
    <property type="entry name" value="IPP_trans"/>
    <property type="match status" value="1"/>
</dbReference>
<dbReference type="InterPro" id="IPR039657">
    <property type="entry name" value="Dimethylallyltransferase"/>
</dbReference>
<dbReference type="InterPro" id="IPR018022">
    <property type="entry name" value="IPT"/>
</dbReference>
<dbReference type="InterPro" id="IPR027417">
    <property type="entry name" value="P-loop_NTPase"/>
</dbReference>
<dbReference type="NCBIfam" id="TIGR00174">
    <property type="entry name" value="miaA"/>
    <property type="match status" value="1"/>
</dbReference>
<dbReference type="PANTHER" id="PTHR11088">
    <property type="entry name" value="TRNA DIMETHYLALLYLTRANSFERASE"/>
    <property type="match status" value="1"/>
</dbReference>
<dbReference type="PANTHER" id="PTHR11088:SF60">
    <property type="entry name" value="TRNA DIMETHYLALLYLTRANSFERASE"/>
    <property type="match status" value="1"/>
</dbReference>
<dbReference type="Pfam" id="PF01715">
    <property type="entry name" value="IPPT"/>
    <property type="match status" value="1"/>
</dbReference>
<dbReference type="SUPFAM" id="SSF52540">
    <property type="entry name" value="P-loop containing nucleoside triphosphate hydrolases"/>
    <property type="match status" value="2"/>
</dbReference>
<proteinExistence type="inferred from homology"/>
<gene>
    <name evidence="1" type="primary">miaA</name>
    <name type="ordered locus">EF_2162</name>
</gene>
<evidence type="ECO:0000255" key="1">
    <source>
        <dbReference type="HAMAP-Rule" id="MF_00185"/>
    </source>
</evidence>
<sequence>MEKVLVIVGPTAVGKTALSIALAKKFNGEIISGDSMQVYRSLDIGTAKVTETEKEGIPHYLIDCREVSETYSAADFQKEGRQKIKEITEKGKLPIIVGGTGLYIQSLLYDFQLGSREIDDSPEIRETYNLFAEEKGNQALWLLLQQKDPLAANSIHFNNRKKVIRALEVFDKTGYSILTPKEKPARLYDYYLLGLETDRALLYERINQRVDQMMTEGLLEEAKQMFQQPHAQAAQGIGYKEFFPYFSGEQSLEMAVETVKQQSRRYAKRQLTWFRNRMAAHWWNLVQQPTDLPKLEKEVAEWLQQKESE</sequence>
<organism>
    <name type="scientific">Enterococcus faecalis (strain ATCC 700802 / V583)</name>
    <dbReference type="NCBI Taxonomy" id="226185"/>
    <lineage>
        <taxon>Bacteria</taxon>
        <taxon>Bacillati</taxon>
        <taxon>Bacillota</taxon>
        <taxon>Bacilli</taxon>
        <taxon>Lactobacillales</taxon>
        <taxon>Enterococcaceae</taxon>
        <taxon>Enterococcus</taxon>
    </lineage>
</organism>